<organism>
    <name type="scientific">Klebsiella pneumoniae (strain 342)</name>
    <dbReference type="NCBI Taxonomy" id="507522"/>
    <lineage>
        <taxon>Bacteria</taxon>
        <taxon>Pseudomonadati</taxon>
        <taxon>Pseudomonadota</taxon>
        <taxon>Gammaproteobacteria</taxon>
        <taxon>Enterobacterales</taxon>
        <taxon>Enterobacteriaceae</taxon>
        <taxon>Klebsiella/Raoultella group</taxon>
        <taxon>Klebsiella</taxon>
        <taxon>Klebsiella pneumoniae complex</taxon>
    </lineage>
</organism>
<name>URK_KLEP3</name>
<sequence length="213" mass="24420">MTDMSHQCVIVGIAGASASGKSLIASTLYRELREQVGDEHIGVIPEDSYYKDQSHLSMEERVKTNYDHPSSMDHSLLFQHLQMLKSGQPIELPVYSYVEHTRTPNTIHVEPKKVIILEGILLLTDARLRNELNFSIFVDTPLDICLMRRIKRDVNERGRSMDSVMAQYQKTVRPMFLQFIEPSKQYADIIVPRGGKNRIAIDILKAKISQFFE</sequence>
<feature type="chain" id="PRO_1000129077" description="Uridine kinase">
    <location>
        <begin position="1"/>
        <end position="213"/>
    </location>
</feature>
<feature type="binding site" evidence="1">
    <location>
        <begin position="15"/>
        <end position="22"/>
    </location>
    <ligand>
        <name>ATP</name>
        <dbReference type="ChEBI" id="CHEBI:30616"/>
    </ligand>
</feature>
<dbReference type="EC" id="2.7.1.48" evidence="1"/>
<dbReference type="EMBL" id="CP000964">
    <property type="protein sequence ID" value="ACI11953.1"/>
    <property type="molecule type" value="Genomic_DNA"/>
</dbReference>
<dbReference type="SMR" id="B5XPC8"/>
<dbReference type="KEGG" id="kpe:KPK_1647"/>
<dbReference type="HOGENOM" id="CLU_021278_1_2_6"/>
<dbReference type="UniPathway" id="UPA00574">
    <property type="reaction ID" value="UER00637"/>
</dbReference>
<dbReference type="UniPathway" id="UPA00579">
    <property type="reaction ID" value="UER00640"/>
</dbReference>
<dbReference type="Proteomes" id="UP000001734">
    <property type="component" value="Chromosome"/>
</dbReference>
<dbReference type="GO" id="GO:0005737">
    <property type="term" value="C:cytoplasm"/>
    <property type="evidence" value="ECO:0007669"/>
    <property type="project" value="UniProtKB-SubCell"/>
</dbReference>
<dbReference type="GO" id="GO:0005524">
    <property type="term" value="F:ATP binding"/>
    <property type="evidence" value="ECO:0007669"/>
    <property type="project" value="UniProtKB-UniRule"/>
</dbReference>
<dbReference type="GO" id="GO:0043771">
    <property type="term" value="F:cytidine kinase activity"/>
    <property type="evidence" value="ECO:0007669"/>
    <property type="project" value="RHEA"/>
</dbReference>
<dbReference type="GO" id="GO:0004849">
    <property type="term" value="F:uridine kinase activity"/>
    <property type="evidence" value="ECO:0007669"/>
    <property type="project" value="UniProtKB-UniRule"/>
</dbReference>
<dbReference type="GO" id="GO:0044211">
    <property type="term" value="P:CTP salvage"/>
    <property type="evidence" value="ECO:0007669"/>
    <property type="project" value="UniProtKB-UniRule"/>
</dbReference>
<dbReference type="GO" id="GO:0044206">
    <property type="term" value="P:UMP salvage"/>
    <property type="evidence" value="ECO:0007669"/>
    <property type="project" value="UniProtKB-UniRule"/>
</dbReference>
<dbReference type="CDD" id="cd02023">
    <property type="entry name" value="UMPK"/>
    <property type="match status" value="1"/>
</dbReference>
<dbReference type="FunFam" id="3.40.50.300:FF:000252">
    <property type="entry name" value="Uridine kinase"/>
    <property type="match status" value="1"/>
</dbReference>
<dbReference type="Gene3D" id="3.40.50.300">
    <property type="entry name" value="P-loop containing nucleotide triphosphate hydrolases"/>
    <property type="match status" value="1"/>
</dbReference>
<dbReference type="HAMAP" id="MF_00551">
    <property type="entry name" value="Uridine_kinase"/>
    <property type="match status" value="1"/>
</dbReference>
<dbReference type="InterPro" id="IPR027417">
    <property type="entry name" value="P-loop_NTPase"/>
</dbReference>
<dbReference type="InterPro" id="IPR006083">
    <property type="entry name" value="PRK/URK"/>
</dbReference>
<dbReference type="InterPro" id="IPR026008">
    <property type="entry name" value="Uridine_kinase"/>
</dbReference>
<dbReference type="InterPro" id="IPR000764">
    <property type="entry name" value="Uridine_kinase-like"/>
</dbReference>
<dbReference type="NCBIfam" id="NF004018">
    <property type="entry name" value="PRK05480.1"/>
    <property type="match status" value="1"/>
</dbReference>
<dbReference type="NCBIfam" id="TIGR00235">
    <property type="entry name" value="udk"/>
    <property type="match status" value="1"/>
</dbReference>
<dbReference type="PANTHER" id="PTHR10285">
    <property type="entry name" value="URIDINE KINASE"/>
    <property type="match status" value="1"/>
</dbReference>
<dbReference type="Pfam" id="PF00485">
    <property type="entry name" value="PRK"/>
    <property type="match status" value="1"/>
</dbReference>
<dbReference type="PRINTS" id="PR00988">
    <property type="entry name" value="URIDINKINASE"/>
</dbReference>
<dbReference type="SUPFAM" id="SSF52540">
    <property type="entry name" value="P-loop containing nucleoside triphosphate hydrolases"/>
    <property type="match status" value="1"/>
</dbReference>
<comment type="catalytic activity">
    <reaction evidence="1">
        <text>uridine + ATP = UMP + ADP + H(+)</text>
        <dbReference type="Rhea" id="RHEA:16825"/>
        <dbReference type="ChEBI" id="CHEBI:15378"/>
        <dbReference type="ChEBI" id="CHEBI:16704"/>
        <dbReference type="ChEBI" id="CHEBI:30616"/>
        <dbReference type="ChEBI" id="CHEBI:57865"/>
        <dbReference type="ChEBI" id="CHEBI:456216"/>
        <dbReference type="EC" id="2.7.1.48"/>
    </reaction>
</comment>
<comment type="catalytic activity">
    <reaction evidence="1">
        <text>cytidine + ATP = CMP + ADP + H(+)</text>
        <dbReference type="Rhea" id="RHEA:24674"/>
        <dbReference type="ChEBI" id="CHEBI:15378"/>
        <dbReference type="ChEBI" id="CHEBI:17562"/>
        <dbReference type="ChEBI" id="CHEBI:30616"/>
        <dbReference type="ChEBI" id="CHEBI:60377"/>
        <dbReference type="ChEBI" id="CHEBI:456216"/>
        <dbReference type="EC" id="2.7.1.48"/>
    </reaction>
</comment>
<comment type="pathway">
    <text evidence="1">Pyrimidine metabolism; CTP biosynthesis via salvage pathway; CTP from cytidine: step 1/3.</text>
</comment>
<comment type="pathway">
    <text evidence="1">Pyrimidine metabolism; UMP biosynthesis via salvage pathway; UMP from uridine: step 1/1.</text>
</comment>
<comment type="subcellular location">
    <subcellularLocation>
        <location evidence="1">Cytoplasm</location>
    </subcellularLocation>
</comment>
<comment type="similarity">
    <text evidence="1">Belongs to the uridine kinase family.</text>
</comment>
<proteinExistence type="inferred from homology"/>
<accession>B5XPC8</accession>
<evidence type="ECO:0000255" key="1">
    <source>
        <dbReference type="HAMAP-Rule" id="MF_00551"/>
    </source>
</evidence>
<protein>
    <recommendedName>
        <fullName evidence="1">Uridine kinase</fullName>
        <ecNumber evidence="1">2.7.1.48</ecNumber>
    </recommendedName>
    <alternativeName>
        <fullName evidence="1">Cytidine monophosphokinase</fullName>
    </alternativeName>
    <alternativeName>
        <fullName evidence="1">Uridine monophosphokinase</fullName>
    </alternativeName>
</protein>
<keyword id="KW-0067">ATP-binding</keyword>
<keyword id="KW-0963">Cytoplasm</keyword>
<keyword id="KW-0418">Kinase</keyword>
<keyword id="KW-0547">Nucleotide-binding</keyword>
<keyword id="KW-0808">Transferase</keyword>
<reference key="1">
    <citation type="journal article" date="2008" name="PLoS Genet.">
        <title>Complete genome sequence of the N2-fixing broad host range endophyte Klebsiella pneumoniae 342 and virulence predictions verified in mice.</title>
        <authorList>
            <person name="Fouts D.E."/>
            <person name="Tyler H.L."/>
            <person name="DeBoy R.T."/>
            <person name="Daugherty S."/>
            <person name="Ren Q."/>
            <person name="Badger J.H."/>
            <person name="Durkin A.S."/>
            <person name="Huot H."/>
            <person name="Shrivastava S."/>
            <person name="Kothari S."/>
            <person name="Dodson R.J."/>
            <person name="Mohamoud Y."/>
            <person name="Khouri H."/>
            <person name="Roesch L.F.W."/>
            <person name="Krogfelt K.A."/>
            <person name="Struve C."/>
            <person name="Triplett E.W."/>
            <person name="Methe B.A."/>
        </authorList>
    </citation>
    <scope>NUCLEOTIDE SEQUENCE [LARGE SCALE GENOMIC DNA]</scope>
    <source>
        <strain>342</strain>
    </source>
</reference>
<gene>
    <name evidence="1" type="primary">udk</name>
    <name type="ordered locus">KPK_1647</name>
</gene>